<protein>
    <recommendedName>
        <fullName evidence="1">Thiazole synthase</fullName>
        <ecNumber evidence="1">2.8.1.10</ecNumber>
    </recommendedName>
</protein>
<accession>Q1D7A6</accession>
<sequence>MSIQDKPFTIAGVTFSSRLILGTGKYPSHDIMKRCHESSGTEMVTVAVRRLDLKATGEASLMNWIDRNRLRLLPNTALCYTADDAVRTCRLAEELGMSKWVKLEVLGDEKTLYPDVEETVKAARILVKEGFTVLPYTSDDPITARKLEDAGCAAVMPLAAPIGSGLGIRNPHNIRLILETVKVPVIVDAGVGTASDAAIAMELGVEAVLMNTAIAGAQDPVRMAVAMKKAVEAGRDAYLAGRIPRKAYGSASSPIDGLVHH</sequence>
<dbReference type="EC" id="2.8.1.10" evidence="1"/>
<dbReference type="EMBL" id="CP000113">
    <property type="protein sequence ID" value="ABF91377.1"/>
    <property type="molecule type" value="Genomic_DNA"/>
</dbReference>
<dbReference type="RefSeq" id="WP_011553313.1">
    <property type="nucleotide sequence ID" value="NC_008095.1"/>
</dbReference>
<dbReference type="SMR" id="Q1D7A6"/>
<dbReference type="STRING" id="246197.MXAN_3268"/>
<dbReference type="EnsemblBacteria" id="ABF91377">
    <property type="protein sequence ID" value="ABF91377"/>
    <property type="gene ID" value="MXAN_3268"/>
</dbReference>
<dbReference type="GeneID" id="41360620"/>
<dbReference type="KEGG" id="mxa:MXAN_3268"/>
<dbReference type="eggNOG" id="COG2022">
    <property type="taxonomic scope" value="Bacteria"/>
</dbReference>
<dbReference type="HOGENOM" id="CLU_062233_1_0_7"/>
<dbReference type="OrthoDB" id="9805935at2"/>
<dbReference type="UniPathway" id="UPA00060"/>
<dbReference type="Proteomes" id="UP000002402">
    <property type="component" value="Chromosome"/>
</dbReference>
<dbReference type="GO" id="GO:0005737">
    <property type="term" value="C:cytoplasm"/>
    <property type="evidence" value="ECO:0007669"/>
    <property type="project" value="UniProtKB-SubCell"/>
</dbReference>
<dbReference type="GO" id="GO:1990107">
    <property type="term" value="F:thiazole synthase activity"/>
    <property type="evidence" value="ECO:0007669"/>
    <property type="project" value="UniProtKB-EC"/>
</dbReference>
<dbReference type="GO" id="GO:0009229">
    <property type="term" value="P:thiamine diphosphate biosynthetic process"/>
    <property type="evidence" value="ECO:0007669"/>
    <property type="project" value="UniProtKB-UniRule"/>
</dbReference>
<dbReference type="CDD" id="cd04728">
    <property type="entry name" value="ThiG"/>
    <property type="match status" value="1"/>
</dbReference>
<dbReference type="Gene3D" id="3.20.20.70">
    <property type="entry name" value="Aldolase class I"/>
    <property type="match status" value="1"/>
</dbReference>
<dbReference type="HAMAP" id="MF_00443">
    <property type="entry name" value="ThiG"/>
    <property type="match status" value="1"/>
</dbReference>
<dbReference type="InterPro" id="IPR013785">
    <property type="entry name" value="Aldolase_TIM"/>
</dbReference>
<dbReference type="InterPro" id="IPR033983">
    <property type="entry name" value="Thiazole_synthase_ThiG"/>
</dbReference>
<dbReference type="InterPro" id="IPR008867">
    <property type="entry name" value="ThiG"/>
</dbReference>
<dbReference type="PANTHER" id="PTHR34266">
    <property type="entry name" value="THIAZOLE SYNTHASE"/>
    <property type="match status" value="1"/>
</dbReference>
<dbReference type="PANTHER" id="PTHR34266:SF2">
    <property type="entry name" value="THIAZOLE SYNTHASE"/>
    <property type="match status" value="1"/>
</dbReference>
<dbReference type="Pfam" id="PF05690">
    <property type="entry name" value="ThiG"/>
    <property type="match status" value="1"/>
</dbReference>
<dbReference type="SUPFAM" id="SSF110399">
    <property type="entry name" value="ThiG-like"/>
    <property type="match status" value="1"/>
</dbReference>
<comment type="function">
    <text evidence="1">Catalyzes the rearrangement of 1-deoxy-D-xylulose 5-phosphate (DXP) to produce the thiazole phosphate moiety of thiamine. Sulfur is provided by the thiocarboxylate moiety of the carrier protein ThiS. In vitro, sulfur can be provided by H(2)S.</text>
</comment>
<comment type="catalytic activity">
    <reaction evidence="1">
        <text>[ThiS sulfur-carrier protein]-C-terminal-Gly-aminoethanethioate + 2-iminoacetate + 1-deoxy-D-xylulose 5-phosphate = [ThiS sulfur-carrier protein]-C-terminal Gly-Gly + 2-[(2R,5Z)-2-carboxy-4-methylthiazol-5(2H)-ylidene]ethyl phosphate + 2 H2O + H(+)</text>
        <dbReference type="Rhea" id="RHEA:26297"/>
        <dbReference type="Rhea" id="RHEA-COMP:12909"/>
        <dbReference type="Rhea" id="RHEA-COMP:19908"/>
        <dbReference type="ChEBI" id="CHEBI:15377"/>
        <dbReference type="ChEBI" id="CHEBI:15378"/>
        <dbReference type="ChEBI" id="CHEBI:57792"/>
        <dbReference type="ChEBI" id="CHEBI:62899"/>
        <dbReference type="ChEBI" id="CHEBI:77846"/>
        <dbReference type="ChEBI" id="CHEBI:90778"/>
        <dbReference type="ChEBI" id="CHEBI:232372"/>
        <dbReference type="EC" id="2.8.1.10"/>
    </reaction>
</comment>
<comment type="pathway">
    <text evidence="1">Cofactor biosynthesis; thiamine diphosphate biosynthesis.</text>
</comment>
<comment type="subunit">
    <text evidence="1">Homotetramer. Forms heterodimers with either ThiH or ThiS.</text>
</comment>
<comment type="subcellular location">
    <subcellularLocation>
        <location evidence="1">Cytoplasm</location>
    </subcellularLocation>
</comment>
<comment type="similarity">
    <text evidence="1">Belongs to the ThiG family.</text>
</comment>
<feature type="chain" id="PRO_1000026016" description="Thiazole synthase">
    <location>
        <begin position="1"/>
        <end position="261"/>
    </location>
</feature>
<feature type="active site" description="Schiff-base intermediate with DXP" evidence="1">
    <location>
        <position position="102"/>
    </location>
</feature>
<feature type="binding site" evidence="1">
    <location>
        <position position="163"/>
    </location>
    <ligand>
        <name>1-deoxy-D-xylulose 5-phosphate</name>
        <dbReference type="ChEBI" id="CHEBI:57792"/>
    </ligand>
</feature>
<feature type="binding site" evidence="1">
    <location>
        <begin position="189"/>
        <end position="190"/>
    </location>
    <ligand>
        <name>1-deoxy-D-xylulose 5-phosphate</name>
        <dbReference type="ChEBI" id="CHEBI:57792"/>
    </ligand>
</feature>
<feature type="binding site" evidence="1">
    <location>
        <begin position="211"/>
        <end position="212"/>
    </location>
    <ligand>
        <name>1-deoxy-D-xylulose 5-phosphate</name>
        <dbReference type="ChEBI" id="CHEBI:57792"/>
    </ligand>
</feature>
<reference key="1">
    <citation type="journal article" date="2006" name="Proc. Natl. Acad. Sci. U.S.A.">
        <title>Evolution of sensory complexity recorded in a myxobacterial genome.</title>
        <authorList>
            <person name="Goldman B.S."/>
            <person name="Nierman W.C."/>
            <person name="Kaiser D."/>
            <person name="Slater S.C."/>
            <person name="Durkin A.S."/>
            <person name="Eisen J.A."/>
            <person name="Ronning C.M."/>
            <person name="Barbazuk W.B."/>
            <person name="Blanchard M."/>
            <person name="Field C."/>
            <person name="Halling C."/>
            <person name="Hinkle G."/>
            <person name="Iartchuk O."/>
            <person name="Kim H.S."/>
            <person name="Mackenzie C."/>
            <person name="Madupu R."/>
            <person name="Miller N."/>
            <person name="Shvartsbeyn A."/>
            <person name="Sullivan S.A."/>
            <person name="Vaudin M."/>
            <person name="Wiegand R."/>
            <person name="Kaplan H.B."/>
        </authorList>
    </citation>
    <scope>NUCLEOTIDE SEQUENCE [LARGE SCALE GENOMIC DNA]</scope>
    <source>
        <strain>DK1622</strain>
    </source>
</reference>
<gene>
    <name evidence="1" type="primary">thiG</name>
    <name type="ordered locus">MXAN_3268</name>
</gene>
<organism>
    <name type="scientific">Myxococcus xanthus (strain DK1622)</name>
    <dbReference type="NCBI Taxonomy" id="246197"/>
    <lineage>
        <taxon>Bacteria</taxon>
        <taxon>Pseudomonadati</taxon>
        <taxon>Myxococcota</taxon>
        <taxon>Myxococcia</taxon>
        <taxon>Myxococcales</taxon>
        <taxon>Cystobacterineae</taxon>
        <taxon>Myxococcaceae</taxon>
        <taxon>Myxococcus</taxon>
    </lineage>
</organism>
<proteinExistence type="inferred from homology"/>
<name>THIG_MYXXD</name>
<evidence type="ECO:0000255" key="1">
    <source>
        <dbReference type="HAMAP-Rule" id="MF_00443"/>
    </source>
</evidence>
<keyword id="KW-0963">Cytoplasm</keyword>
<keyword id="KW-1185">Reference proteome</keyword>
<keyword id="KW-0704">Schiff base</keyword>
<keyword id="KW-0784">Thiamine biosynthesis</keyword>
<keyword id="KW-0808">Transferase</keyword>